<name>PLPK1_ARATH</name>
<accession>Q9LXB8</accession>
<accession>Q940G9</accession>
<evidence type="ECO:0000255" key="1"/>
<evidence type="ECO:0000256" key="2">
    <source>
        <dbReference type="SAM" id="MobiDB-lite"/>
    </source>
</evidence>
<evidence type="ECO:0000269" key="3">
    <source>
    </source>
</evidence>
<evidence type="ECO:0000269" key="4">
    <source>
    </source>
</evidence>
<evidence type="ECO:0000303" key="5">
    <source>
    </source>
</evidence>
<evidence type="ECO:0000305" key="6"/>
<evidence type="ECO:0000305" key="7">
    <source>
    </source>
</evidence>
<evidence type="ECO:0000312" key="8">
    <source>
        <dbReference type="Araport" id="AT5G09530"/>
    </source>
</evidence>
<evidence type="ECO:0000312" key="9">
    <source>
        <dbReference type="EMBL" id="AL391712"/>
    </source>
</evidence>
<evidence type="ECO:0000312" key="10">
    <source>
        <dbReference type="EMBL" id="CAB89377.1"/>
    </source>
</evidence>
<keyword id="KW-0134">Cell wall</keyword>
<keyword id="KW-0217">Developmental protein</keyword>
<keyword id="KW-1185">Reference proteome</keyword>
<keyword id="KW-0677">Repeat</keyword>
<keyword id="KW-0964">Secreted</keyword>
<keyword id="KW-0732">Signal</keyword>
<proteinExistence type="evidence at transcript level"/>
<protein>
    <recommendedName>
        <fullName evidence="6">Protein PELPK1</fullName>
    </recommendedName>
    <alternativeName>
        <fullName evidence="5">Proline-rich protein 10</fullName>
    </alternativeName>
    <alternativeName>
        <fullName evidence="5">Protein Pro-Glu-Leu|Ile|Val-Pro-Lys 1</fullName>
    </alternativeName>
</protein>
<organism>
    <name type="scientific">Arabidopsis thaliana</name>
    <name type="common">Mouse-ear cress</name>
    <dbReference type="NCBI Taxonomy" id="3702"/>
    <lineage>
        <taxon>Eukaryota</taxon>
        <taxon>Viridiplantae</taxon>
        <taxon>Streptophyta</taxon>
        <taxon>Embryophyta</taxon>
        <taxon>Tracheophyta</taxon>
        <taxon>Spermatophyta</taxon>
        <taxon>Magnoliopsida</taxon>
        <taxon>eudicotyledons</taxon>
        <taxon>Gunneridae</taxon>
        <taxon>Pentapetalae</taxon>
        <taxon>rosids</taxon>
        <taxon>malvids</taxon>
        <taxon>Brassicales</taxon>
        <taxon>Brassicaceae</taxon>
        <taxon>Camelineae</taxon>
        <taxon>Arabidopsis</taxon>
    </lineage>
</organism>
<sequence>MALMKKSLSAALLSSPLLIICLIALLADPFSVGARRLLEDPKPEIPKLPELPKFEVPKLPEFPKPELPKLPEFPKPELPKIPEIPKPELPKVPEIPKPEETKLPDIPKLELPKFPEIPKPELPKMPEIPKPELPKVPEIQKPELPKMPEIPKPELPKFPEIPKPDLPKFPENSKPEVPKLMETEKPEAPKVPEIPKPELPKLPEVPKLEAPKVPEIQKPELPKMPELPKMPEIQKPELPKLPEVPKLEAPKVPEIQKPELPKMPELPKMPEIQKPELPKMPEIQKPELPKVPEVPKPELPTVPEVPKSEAPKFPEIPKPELPKIPEVPKPELPKVPEITKPAVPEIPKPELPTMPQLPKLPEFPKVPGTP</sequence>
<gene>
    <name evidence="5" type="primary">PELPK1</name>
    <name evidence="5" type="synonym">PRP10</name>
    <name evidence="8" type="ordered locus">At5g09530</name>
    <name evidence="10" type="ORF">F17I14.280</name>
    <name evidence="9" type="ORF">T5E8.2</name>
</gene>
<feature type="signal peptide" evidence="1">
    <location>
        <begin position="1"/>
        <end position="34"/>
    </location>
</feature>
<feature type="chain" id="PRO_0000441985" description="Protein PELPK1">
    <location>
        <begin position="35"/>
        <end position="370"/>
    </location>
</feature>
<feature type="repeat" description="1" evidence="7">
    <location>
        <begin position="43"/>
        <end position="47"/>
    </location>
</feature>
<feature type="repeat" description="2" evidence="7">
    <location>
        <begin position="49"/>
        <end position="53"/>
    </location>
</feature>
<feature type="repeat" description="3" evidence="7">
    <location>
        <begin position="54"/>
        <end position="58"/>
    </location>
</feature>
<feature type="repeat" description="4" evidence="7">
    <location>
        <begin position="60"/>
        <end position="64"/>
    </location>
</feature>
<feature type="repeat" description="5" evidence="7">
    <location>
        <begin position="65"/>
        <end position="69"/>
    </location>
</feature>
<feature type="repeat" description="6" evidence="7">
    <location>
        <begin position="71"/>
        <end position="75"/>
    </location>
</feature>
<feature type="repeat" description="7" evidence="7">
    <location>
        <begin position="76"/>
        <end position="80"/>
    </location>
</feature>
<feature type="repeat" description="8" evidence="7">
    <location>
        <begin position="82"/>
        <end position="86"/>
    </location>
</feature>
<feature type="repeat" description="9" evidence="7">
    <location>
        <begin position="87"/>
        <end position="91"/>
    </location>
</feature>
<feature type="repeat" description="10" evidence="7">
    <location>
        <begin position="93"/>
        <end position="97"/>
    </location>
</feature>
<feature type="repeat" description="11" evidence="7">
    <location>
        <begin position="98"/>
        <end position="102"/>
    </location>
</feature>
<feature type="repeat" description="12" evidence="7">
    <location>
        <begin position="104"/>
        <end position="108"/>
    </location>
</feature>
<feature type="repeat" description="13" evidence="7">
    <location>
        <begin position="109"/>
        <end position="113"/>
    </location>
</feature>
<feature type="repeat" description="14" evidence="7">
    <location>
        <begin position="115"/>
        <end position="119"/>
    </location>
</feature>
<feature type="repeat" description="15" evidence="7">
    <location>
        <begin position="120"/>
        <end position="124"/>
    </location>
</feature>
<feature type="repeat" description="16" evidence="7">
    <location>
        <begin position="126"/>
        <end position="130"/>
    </location>
</feature>
<feature type="repeat" description="17" evidence="7">
    <location>
        <begin position="131"/>
        <end position="135"/>
    </location>
</feature>
<feature type="repeat" description="18" evidence="7">
    <location>
        <begin position="137"/>
        <end position="141"/>
    </location>
</feature>
<feature type="repeat" description="19" evidence="7">
    <location>
        <begin position="142"/>
        <end position="146"/>
    </location>
</feature>
<feature type="repeat" description="20" evidence="7">
    <location>
        <begin position="148"/>
        <end position="152"/>
    </location>
</feature>
<feature type="repeat" description="21" evidence="7">
    <location>
        <begin position="153"/>
        <end position="157"/>
    </location>
</feature>
<feature type="repeat" description="22" evidence="7">
    <location>
        <begin position="159"/>
        <end position="163"/>
    </location>
</feature>
<feature type="repeat" description="23" evidence="7">
    <location>
        <begin position="164"/>
        <end position="168"/>
    </location>
</feature>
<feature type="repeat" description="24" evidence="7">
    <location>
        <begin position="175"/>
        <end position="179"/>
    </location>
</feature>
<feature type="repeat" description="25" evidence="7">
    <location>
        <begin position="186"/>
        <end position="190"/>
    </location>
</feature>
<feature type="repeat" description="26" evidence="7">
    <location>
        <begin position="192"/>
        <end position="196"/>
    </location>
</feature>
<feature type="repeat" description="27" evidence="7">
    <location>
        <begin position="197"/>
        <end position="201"/>
    </location>
</feature>
<feature type="repeat" description="28" evidence="7">
    <location>
        <begin position="203"/>
        <end position="207"/>
    </location>
</feature>
<feature type="repeat" description="29" evidence="7">
    <location>
        <begin position="214"/>
        <end position="218"/>
    </location>
</feature>
<feature type="repeat" description="30" evidence="7">
    <location>
        <begin position="219"/>
        <end position="223"/>
    </location>
</feature>
<feature type="repeat" description="31" evidence="7">
    <location>
        <begin position="225"/>
        <end position="229"/>
    </location>
</feature>
<feature type="repeat" description="32" evidence="7">
    <location>
        <begin position="231"/>
        <end position="235"/>
    </location>
</feature>
<feature type="repeat" description="33" evidence="7">
    <location>
        <begin position="236"/>
        <end position="240"/>
    </location>
</feature>
<feature type="repeat" description="34" evidence="7">
    <location>
        <begin position="242"/>
        <end position="246"/>
    </location>
</feature>
<feature type="repeat" description="35" evidence="7">
    <location>
        <begin position="247"/>
        <end position="251"/>
    </location>
</feature>
<feature type="repeat" description="36" evidence="7">
    <location>
        <begin position="253"/>
        <end position="257"/>
    </location>
</feature>
<feature type="repeat" description="37" evidence="7">
    <location>
        <begin position="258"/>
        <end position="262"/>
    </location>
</feature>
<feature type="repeat" description="38" evidence="7">
    <location>
        <begin position="264"/>
        <end position="268"/>
    </location>
</feature>
<feature type="repeat" description="39" evidence="7">
    <location>
        <begin position="270"/>
        <end position="274"/>
    </location>
</feature>
<feature type="repeat" description="40" evidence="7">
    <location>
        <begin position="275"/>
        <end position="279"/>
    </location>
</feature>
<feature type="repeat" description="41" evidence="7">
    <location>
        <begin position="281"/>
        <end position="285"/>
    </location>
</feature>
<feature type="repeat" description="42" evidence="7">
    <location>
        <begin position="286"/>
        <end position="290"/>
    </location>
</feature>
<feature type="repeat" description="43" evidence="7">
    <location>
        <begin position="292"/>
        <end position="296"/>
    </location>
</feature>
<feature type="repeat" description="44" evidence="7">
    <location>
        <begin position="303"/>
        <end position="307"/>
    </location>
</feature>
<feature type="repeat" description="45" evidence="7">
    <location>
        <begin position="314"/>
        <end position="318"/>
    </location>
</feature>
<feature type="repeat" description="46" evidence="7">
    <location>
        <begin position="319"/>
        <end position="323"/>
    </location>
</feature>
<feature type="repeat" description="47" evidence="7">
    <location>
        <begin position="325"/>
        <end position="329"/>
    </location>
</feature>
<feature type="repeat" description="48" evidence="7">
    <location>
        <begin position="330"/>
        <end position="334"/>
    </location>
</feature>
<feature type="repeat" description="49" evidence="7">
    <location>
        <begin position="336"/>
        <end position="340"/>
    </location>
</feature>
<feature type="repeat" description="50" evidence="7">
    <location>
        <begin position="344"/>
        <end position="348"/>
    </location>
</feature>
<feature type="repeat" description="51" evidence="7">
    <location>
        <begin position="355"/>
        <end position="359"/>
    </location>
</feature>
<feature type="repeat" description="52" evidence="7">
    <location>
        <begin position="361"/>
        <end position="365"/>
    </location>
</feature>
<feature type="region of interest" description="52 X 5 AA tandem repeat of P-[DEGQ]-[AEFLIV]-[QPT]-K" evidence="7">
    <location>
        <begin position="43"/>
        <end position="365"/>
    </location>
</feature>
<feature type="region of interest" description="Disordered" evidence="2">
    <location>
        <begin position="65"/>
        <end position="370"/>
    </location>
</feature>
<feature type="compositionally biased region" description="Basic and acidic residues" evidence="2">
    <location>
        <begin position="65"/>
        <end position="223"/>
    </location>
</feature>
<feature type="compositionally biased region" description="Basic and acidic residues" evidence="2">
    <location>
        <begin position="232"/>
        <end position="262"/>
    </location>
</feature>
<feature type="compositionally biased region" description="Basic and acidic residues" evidence="2">
    <location>
        <begin position="271"/>
        <end position="296"/>
    </location>
</feature>
<feature type="compositionally biased region" description="Basic and acidic residues" evidence="2">
    <location>
        <begin position="306"/>
        <end position="334"/>
    </location>
</feature>
<feature type="sequence conflict" description="In Ref. 3; AAK96839." evidence="6" ref="3">
    <original>P</original>
    <variation>S</variation>
    <location>
        <position position="175"/>
    </location>
</feature>
<reference key="1">
    <citation type="journal article" date="2000" name="Nature">
        <title>Sequence and analysis of chromosome 5 of the plant Arabidopsis thaliana.</title>
        <authorList>
            <person name="Tabata S."/>
            <person name="Kaneko T."/>
            <person name="Nakamura Y."/>
            <person name="Kotani H."/>
            <person name="Kato T."/>
            <person name="Asamizu E."/>
            <person name="Miyajima N."/>
            <person name="Sasamoto S."/>
            <person name="Kimura T."/>
            <person name="Hosouchi T."/>
            <person name="Kawashima K."/>
            <person name="Kohara M."/>
            <person name="Matsumoto M."/>
            <person name="Matsuno A."/>
            <person name="Muraki A."/>
            <person name="Nakayama S."/>
            <person name="Nakazaki N."/>
            <person name="Naruo K."/>
            <person name="Okumura S."/>
            <person name="Shinpo S."/>
            <person name="Takeuchi C."/>
            <person name="Wada T."/>
            <person name="Watanabe A."/>
            <person name="Yamada M."/>
            <person name="Yasuda M."/>
            <person name="Sato S."/>
            <person name="de la Bastide M."/>
            <person name="Huang E."/>
            <person name="Spiegel L."/>
            <person name="Gnoj L."/>
            <person name="O'Shaughnessy A."/>
            <person name="Preston R."/>
            <person name="Habermann K."/>
            <person name="Murray J."/>
            <person name="Johnson D."/>
            <person name="Rohlfing T."/>
            <person name="Nelson J."/>
            <person name="Stoneking T."/>
            <person name="Pepin K."/>
            <person name="Spieth J."/>
            <person name="Sekhon M."/>
            <person name="Armstrong J."/>
            <person name="Becker M."/>
            <person name="Belter E."/>
            <person name="Cordum H."/>
            <person name="Cordes M."/>
            <person name="Courtney L."/>
            <person name="Courtney W."/>
            <person name="Dante M."/>
            <person name="Du H."/>
            <person name="Edwards J."/>
            <person name="Fryman J."/>
            <person name="Haakensen B."/>
            <person name="Lamar E."/>
            <person name="Latreille P."/>
            <person name="Leonard S."/>
            <person name="Meyer R."/>
            <person name="Mulvaney E."/>
            <person name="Ozersky P."/>
            <person name="Riley A."/>
            <person name="Strowmatt C."/>
            <person name="Wagner-McPherson C."/>
            <person name="Wollam A."/>
            <person name="Yoakum M."/>
            <person name="Bell M."/>
            <person name="Dedhia N."/>
            <person name="Parnell L."/>
            <person name="Shah R."/>
            <person name="Rodriguez M."/>
            <person name="Hoon See L."/>
            <person name="Vil D."/>
            <person name="Baker J."/>
            <person name="Kirchoff K."/>
            <person name="Toth K."/>
            <person name="King L."/>
            <person name="Bahret A."/>
            <person name="Miller B."/>
            <person name="Marra M.A."/>
            <person name="Martienssen R."/>
            <person name="McCombie W.R."/>
            <person name="Wilson R.K."/>
            <person name="Murphy G."/>
            <person name="Bancroft I."/>
            <person name="Volckaert G."/>
            <person name="Wambutt R."/>
            <person name="Duesterhoeft A."/>
            <person name="Stiekema W."/>
            <person name="Pohl T."/>
            <person name="Entian K.-D."/>
            <person name="Terryn N."/>
            <person name="Hartley N."/>
            <person name="Bent E."/>
            <person name="Johnson S."/>
            <person name="Langham S.-A."/>
            <person name="McCullagh B."/>
            <person name="Robben J."/>
            <person name="Grymonprez B."/>
            <person name="Zimmermann W."/>
            <person name="Ramsperger U."/>
            <person name="Wedler H."/>
            <person name="Balke K."/>
            <person name="Wedler E."/>
            <person name="Peters S."/>
            <person name="van Staveren M."/>
            <person name="Dirkse W."/>
            <person name="Mooijman P."/>
            <person name="Klein Lankhorst R."/>
            <person name="Weitzenegger T."/>
            <person name="Bothe G."/>
            <person name="Rose M."/>
            <person name="Hauf J."/>
            <person name="Berneiser S."/>
            <person name="Hempel S."/>
            <person name="Feldpausch M."/>
            <person name="Lamberth S."/>
            <person name="Villarroel R."/>
            <person name="Gielen J."/>
            <person name="Ardiles W."/>
            <person name="Bents O."/>
            <person name="Lemcke K."/>
            <person name="Kolesov G."/>
            <person name="Mayer K.F.X."/>
            <person name="Rudd S."/>
            <person name="Schoof H."/>
            <person name="Schueller C."/>
            <person name="Zaccaria P."/>
            <person name="Mewes H.-W."/>
            <person name="Bevan M."/>
            <person name="Fransz P.F."/>
        </authorList>
    </citation>
    <scope>NUCLEOTIDE SEQUENCE [LARGE SCALE GENOMIC DNA]</scope>
    <source>
        <strain>cv. Columbia</strain>
    </source>
</reference>
<reference key="2">
    <citation type="journal article" date="2017" name="Plant J.">
        <title>Araport11: a complete reannotation of the Arabidopsis thaliana reference genome.</title>
        <authorList>
            <person name="Cheng C.Y."/>
            <person name="Krishnakumar V."/>
            <person name="Chan A.P."/>
            <person name="Thibaud-Nissen F."/>
            <person name="Schobel S."/>
            <person name="Town C.D."/>
        </authorList>
    </citation>
    <scope>GENOME REANNOTATION</scope>
    <source>
        <strain>cv. Columbia</strain>
    </source>
</reference>
<reference key="3">
    <citation type="journal article" date="2003" name="Science">
        <title>Empirical analysis of transcriptional activity in the Arabidopsis genome.</title>
        <authorList>
            <person name="Yamada K."/>
            <person name="Lim J."/>
            <person name="Dale J.M."/>
            <person name="Chen H."/>
            <person name="Shinn P."/>
            <person name="Palm C.J."/>
            <person name="Southwick A.M."/>
            <person name="Wu H.C."/>
            <person name="Kim C.J."/>
            <person name="Nguyen M."/>
            <person name="Pham P.K."/>
            <person name="Cheuk R.F."/>
            <person name="Karlin-Newmann G."/>
            <person name="Liu S.X."/>
            <person name="Lam B."/>
            <person name="Sakano H."/>
            <person name="Wu T."/>
            <person name="Yu G."/>
            <person name="Miranda M."/>
            <person name="Quach H.L."/>
            <person name="Tripp M."/>
            <person name="Chang C.H."/>
            <person name="Lee J.M."/>
            <person name="Toriumi M.J."/>
            <person name="Chan M.M."/>
            <person name="Tang C.C."/>
            <person name="Onodera C.S."/>
            <person name="Deng J.M."/>
            <person name="Akiyama K."/>
            <person name="Ansari Y."/>
            <person name="Arakawa T."/>
            <person name="Banh J."/>
            <person name="Banno F."/>
            <person name="Bowser L."/>
            <person name="Brooks S.Y."/>
            <person name="Carninci P."/>
            <person name="Chao Q."/>
            <person name="Choy N."/>
            <person name="Enju A."/>
            <person name="Goldsmith A.D."/>
            <person name="Gurjal M."/>
            <person name="Hansen N.F."/>
            <person name="Hayashizaki Y."/>
            <person name="Johnson-Hopson C."/>
            <person name="Hsuan V.W."/>
            <person name="Iida K."/>
            <person name="Karnes M."/>
            <person name="Khan S."/>
            <person name="Koesema E."/>
            <person name="Ishida J."/>
            <person name="Jiang P.X."/>
            <person name="Jones T."/>
            <person name="Kawai J."/>
            <person name="Kamiya A."/>
            <person name="Meyers C."/>
            <person name="Nakajima M."/>
            <person name="Narusaka M."/>
            <person name="Seki M."/>
            <person name="Sakurai T."/>
            <person name="Satou M."/>
            <person name="Tamse R."/>
            <person name="Vaysberg M."/>
            <person name="Wallender E.K."/>
            <person name="Wong C."/>
            <person name="Yamamura Y."/>
            <person name="Yuan S."/>
            <person name="Shinozaki K."/>
            <person name="Davis R.W."/>
            <person name="Theologis A."/>
            <person name="Ecker J.R."/>
        </authorList>
    </citation>
    <scope>NUCLEOTIDE SEQUENCE [LARGE SCALE MRNA]</scope>
    <source>
        <strain>cv. Columbia</strain>
    </source>
</reference>
<reference key="4">
    <citation type="journal article" date="2011" name="Plant Cell Rep.">
        <title>PELPK1 (At5g09530) contains a unique pentapeptide repeat and is a positive regulator of germination in Arabidopsis thaliana.</title>
        <authorList>
            <person name="Rashid A."/>
            <person name="Deyholos M.K."/>
        </authorList>
    </citation>
    <scope>FUNCTION</scope>
    <scope>DISRUPTION PHENOTYPE</scope>
    <scope>GENE FAMILY</scope>
    <scope>NOMENCLATURE</scope>
</reference>
<reference key="5">
    <citation type="journal article" date="2014" name="Mol. Biol. (Mosk.)">
        <title>[Sub-cellular localization of PELPK1 in Arabidopsis thaliana as determined by translational fusion with green fluorescent protein reporter].</title>
        <authorList>
            <person name="Rashid A."/>
        </authorList>
    </citation>
    <scope>SUBCELLULAR LOCATION</scope>
</reference>
<comment type="function">
    <text evidence="3">Positive regulator of germination and plant growth.</text>
</comment>
<comment type="subcellular location">
    <subcellularLocation>
        <location evidence="4">Secreted</location>
        <location evidence="4">Cell wall</location>
    </subcellularLocation>
</comment>
<comment type="disruption phenotype">
    <text evidence="3">Slower germination and root growth, delayed growth and flowering.</text>
</comment>
<dbReference type="EMBL" id="AL353994">
    <property type="protein sequence ID" value="CAB89377.1"/>
    <property type="molecule type" value="Genomic_DNA"/>
</dbReference>
<dbReference type="EMBL" id="AL391712">
    <property type="status" value="NOT_ANNOTATED_CDS"/>
    <property type="molecule type" value="Genomic_DNA"/>
</dbReference>
<dbReference type="EMBL" id="CP002688">
    <property type="protein sequence ID" value="AED91407.1"/>
    <property type="molecule type" value="Genomic_DNA"/>
</dbReference>
<dbReference type="EMBL" id="AY054648">
    <property type="protein sequence ID" value="AAK96839.1"/>
    <property type="molecule type" value="mRNA"/>
</dbReference>
<dbReference type="PIR" id="T49945">
    <property type="entry name" value="T49945"/>
</dbReference>
<dbReference type="RefSeq" id="NP_196515.1">
    <property type="nucleotide sequence ID" value="NM_120990.3"/>
</dbReference>
<dbReference type="FunCoup" id="Q9LXB8">
    <property type="interactions" value="1"/>
</dbReference>
<dbReference type="STRING" id="3702.Q9LXB8"/>
<dbReference type="PaxDb" id="3702-AT5G09530.1"/>
<dbReference type="ProteomicsDB" id="234770"/>
<dbReference type="EnsemblPlants" id="AT5G09530.1">
    <property type="protein sequence ID" value="AT5G09530.1"/>
    <property type="gene ID" value="AT5G09530"/>
</dbReference>
<dbReference type="GeneID" id="830812"/>
<dbReference type="Gramene" id="AT5G09530.1">
    <property type="protein sequence ID" value="AT5G09530.1"/>
    <property type="gene ID" value="AT5G09530"/>
</dbReference>
<dbReference type="KEGG" id="ath:AT5G09530"/>
<dbReference type="Araport" id="AT5G09530"/>
<dbReference type="TAIR" id="AT5G09530">
    <property type="gene designation" value="PELPK1"/>
</dbReference>
<dbReference type="eggNOG" id="ENOG502QSZR">
    <property type="taxonomic scope" value="Eukaryota"/>
</dbReference>
<dbReference type="HOGENOM" id="CLU_063769_0_0_1"/>
<dbReference type="InParanoid" id="Q9LXB8"/>
<dbReference type="OMA" id="PNHELPP"/>
<dbReference type="PRO" id="PR:Q9LXB8"/>
<dbReference type="Proteomes" id="UP000006548">
    <property type="component" value="Chromosome 5"/>
</dbReference>
<dbReference type="ExpressionAtlas" id="Q9LXB8">
    <property type="expression patterns" value="baseline and differential"/>
</dbReference>
<dbReference type="GO" id="GO:0005576">
    <property type="term" value="C:extracellular region"/>
    <property type="evidence" value="ECO:0007669"/>
    <property type="project" value="UniProtKB-KW"/>
</dbReference>
<dbReference type="GO" id="GO:0009505">
    <property type="term" value="C:plant-type cell wall"/>
    <property type="evidence" value="ECO:0000314"/>
    <property type="project" value="UniProtKB"/>
</dbReference>
<dbReference type="GO" id="GO:0010030">
    <property type="term" value="P:positive regulation of seed germination"/>
    <property type="evidence" value="ECO:0000315"/>
    <property type="project" value="UniProtKB"/>
</dbReference>
<dbReference type="GO" id="GO:0009791">
    <property type="term" value="P:post-embryonic development"/>
    <property type="evidence" value="ECO:0000315"/>
    <property type="project" value="TAIR"/>
</dbReference>
<dbReference type="GO" id="GO:2000028">
    <property type="term" value="P:regulation of photoperiodism, flowering"/>
    <property type="evidence" value="ECO:0000315"/>
    <property type="project" value="UniProtKB"/>
</dbReference>
<dbReference type="InterPro" id="IPR044659">
    <property type="entry name" value="PELPK1_2"/>
</dbReference>
<dbReference type="PANTHER" id="PTHR33088">
    <property type="entry name" value="MUCIN-2"/>
    <property type="match status" value="1"/>
</dbReference>
<dbReference type="PANTHER" id="PTHR33088:SF28">
    <property type="entry name" value="PROTEIN PELPK1-RELATED"/>
    <property type="match status" value="1"/>
</dbReference>
<dbReference type="PRINTS" id="PR01217">
    <property type="entry name" value="PRICHEXTENSN"/>
</dbReference>